<gene>
    <name evidence="5" type="primary">ILL5</name>
    <name evidence="7" type="ordered locus">At1g51780</name>
    <name evidence="8" type="ORF">F19C24.29</name>
</gene>
<dbReference type="EC" id="3.5.1.-" evidence="6"/>
<dbReference type="EMBL" id="AF085806">
    <property type="protein sequence ID" value="AAD48152.1"/>
    <property type="molecule type" value="Genomic_DNA"/>
</dbReference>
<dbReference type="EMBL" id="AC025294">
    <property type="protein sequence ID" value="AAG50869.1"/>
    <property type="molecule type" value="Genomic_DNA"/>
</dbReference>
<dbReference type="EMBL" id="CP002684">
    <property type="protein sequence ID" value="AEE32715.1"/>
    <property type="molecule type" value="Genomic_DNA"/>
</dbReference>
<dbReference type="PIR" id="H96556">
    <property type="entry name" value="H96556"/>
</dbReference>
<dbReference type="RefSeq" id="NP_175589.1">
    <property type="nucleotide sequence ID" value="NM_104057.1"/>
</dbReference>
<dbReference type="SMR" id="Q9SWX9"/>
<dbReference type="FunCoup" id="Q9SWX9">
    <property type="interactions" value="119"/>
</dbReference>
<dbReference type="STRING" id="3702.Q9SWX9"/>
<dbReference type="MEROPS" id="M20.A01"/>
<dbReference type="iPTMnet" id="Q9SWX9"/>
<dbReference type="PaxDb" id="3702-AT1G51780.1"/>
<dbReference type="EnsemblPlants" id="AT1G51780.1">
    <property type="protein sequence ID" value="AT1G51780.1"/>
    <property type="gene ID" value="AT1G51780"/>
</dbReference>
<dbReference type="GeneID" id="841604"/>
<dbReference type="Gramene" id="AT1G51780.1">
    <property type="protein sequence ID" value="AT1G51780.1"/>
    <property type="gene ID" value="AT1G51780"/>
</dbReference>
<dbReference type="KEGG" id="ath:AT1G51780"/>
<dbReference type="Araport" id="AT1G51780"/>
<dbReference type="TAIR" id="AT1G51780">
    <property type="gene designation" value="ILL5"/>
</dbReference>
<dbReference type="eggNOG" id="ENOG502QQEM">
    <property type="taxonomic scope" value="Eukaryota"/>
</dbReference>
<dbReference type="HOGENOM" id="CLU_023257_0_0_1"/>
<dbReference type="InParanoid" id="Q9SWX9"/>
<dbReference type="OMA" id="EFIWHAG"/>
<dbReference type="PhylomeDB" id="Q9SWX9"/>
<dbReference type="BioCyc" id="ARA:AT1G51780-MONOMER"/>
<dbReference type="CD-CODE" id="4299E36E">
    <property type="entry name" value="Nucleolus"/>
</dbReference>
<dbReference type="PRO" id="PR:Q9SWX9"/>
<dbReference type="Proteomes" id="UP000006548">
    <property type="component" value="Chromosome 1"/>
</dbReference>
<dbReference type="ExpressionAtlas" id="Q9SWX9">
    <property type="expression patterns" value="baseline and differential"/>
</dbReference>
<dbReference type="GO" id="GO:0005788">
    <property type="term" value="C:endoplasmic reticulum lumen"/>
    <property type="evidence" value="ECO:0007669"/>
    <property type="project" value="UniProtKB-SubCell"/>
</dbReference>
<dbReference type="GO" id="GO:0005634">
    <property type="term" value="C:nucleus"/>
    <property type="evidence" value="ECO:0007005"/>
    <property type="project" value="TAIR"/>
</dbReference>
<dbReference type="GO" id="GO:0010178">
    <property type="term" value="F:IAA-amino acid conjugate hydrolase activity"/>
    <property type="evidence" value="ECO:0000250"/>
    <property type="project" value="TAIR"/>
</dbReference>
<dbReference type="GO" id="GO:0046872">
    <property type="term" value="F:metal ion binding"/>
    <property type="evidence" value="ECO:0007669"/>
    <property type="project" value="UniProtKB-KW"/>
</dbReference>
<dbReference type="GO" id="GO:0009850">
    <property type="term" value="P:auxin metabolic process"/>
    <property type="evidence" value="ECO:0007669"/>
    <property type="project" value="InterPro"/>
</dbReference>
<dbReference type="GO" id="GO:0010112">
    <property type="term" value="P:regulation of systemic acquired resistance"/>
    <property type="evidence" value="ECO:0000270"/>
    <property type="project" value="TAIR"/>
</dbReference>
<dbReference type="CDD" id="cd08017">
    <property type="entry name" value="M20_IAA_Hyd"/>
    <property type="match status" value="1"/>
</dbReference>
<dbReference type="FunFam" id="3.30.70.360:FF:000001">
    <property type="entry name" value="N-acetyldiaminopimelate deacetylase"/>
    <property type="match status" value="1"/>
</dbReference>
<dbReference type="Gene3D" id="3.30.70.360">
    <property type="match status" value="1"/>
</dbReference>
<dbReference type="Gene3D" id="3.40.630.10">
    <property type="entry name" value="Zn peptidases"/>
    <property type="match status" value="1"/>
</dbReference>
<dbReference type="InterPro" id="IPR017439">
    <property type="entry name" value="Amidohydrolase"/>
</dbReference>
<dbReference type="InterPro" id="IPR036264">
    <property type="entry name" value="Bact_exopeptidase_dim_dom"/>
</dbReference>
<dbReference type="InterPro" id="IPR044757">
    <property type="entry name" value="ILR1-like_Hyd"/>
</dbReference>
<dbReference type="InterPro" id="IPR002933">
    <property type="entry name" value="Peptidase_M20"/>
</dbReference>
<dbReference type="InterPro" id="IPR011650">
    <property type="entry name" value="Peptidase_M20_dimer"/>
</dbReference>
<dbReference type="NCBIfam" id="TIGR01891">
    <property type="entry name" value="amidohydrolases"/>
    <property type="match status" value="1"/>
</dbReference>
<dbReference type="PANTHER" id="PTHR11014:SF171">
    <property type="entry name" value="IAA-AMINO ACID HYDROLASE ILR1-LIKE 4-RELATED"/>
    <property type="match status" value="1"/>
</dbReference>
<dbReference type="PANTHER" id="PTHR11014">
    <property type="entry name" value="PEPTIDASE M20 FAMILY MEMBER"/>
    <property type="match status" value="1"/>
</dbReference>
<dbReference type="Pfam" id="PF07687">
    <property type="entry name" value="M20_dimer"/>
    <property type="match status" value="1"/>
</dbReference>
<dbReference type="Pfam" id="PF01546">
    <property type="entry name" value="Peptidase_M20"/>
    <property type="match status" value="1"/>
</dbReference>
<dbReference type="PIRSF" id="PIRSF005962">
    <property type="entry name" value="Pept_M20D_amidohydro"/>
    <property type="match status" value="1"/>
</dbReference>
<dbReference type="SUPFAM" id="SSF55031">
    <property type="entry name" value="Bacterial exopeptidase dimerisation domain"/>
    <property type="match status" value="1"/>
</dbReference>
<dbReference type="SUPFAM" id="SSF53187">
    <property type="entry name" value="Zn-dependent exopeptidases"/>
    <property type="match status" value="1"/>
</dbReference>
<dbReference type="PROSITE" id="PS00014">
    <property type="entry name" value="ER_TARGET"/>
    <property type="match status" value="1"/>
</dbReference>
<proteinExistence type="inferred from homology"/>
<sequence>MSFCKLVSFVLILHLLNSCLISCSSNDLSQIPKNFLSLAKREDFFDWMVGIRRRIHENPELGYEEVETSKLVKTELDKMGVSYKNPVAVTGVIGYVGTGHAPFVALRADMDALPIQEMVEWEHKSKIPGKMHACGHDAHTTMLLGAAKLLKEHQEELQGTVILVFQPAEEGGAGAKKIVEAGVLENVGAIFGLHVSNLLGLGQLSSREGLLMAGSGRFKATISGKGGHAALPQFAIDPVLAASNVILSLQHLVSREADPLDSQVVTVATFEGSDAFNVIPDSVTIGGTFRALLPKSFEQLKQRIVQVITTQASVNMCNATVDFLEDETPPFPPTVNNKTLHLFYKNVSVDMLGIENYVETLPVMVSEDFAFYQQAIPGHFSFVGMQNKSHSPMANPHSPFFEVNEELLPYGASLLASLATRYLLDSSSSPNKDEL</sequence>
<name>ILL5_ARATH</name>
<organism>
    <name type="scientific">Arabidopsis thaliana</name>
    <name type="common">Mouse-ear cress</name>
    <dbReference type="NCBI Taxonomy" id="3702"/>
    <lineage>
        <taxon>Eukaryota</taxon>
        <taxon>Viridiplantae</taxon>
        <taxon>Streptophyta</taxon>
        <taxon>Embryophyta</taxon>
        <taxon>Tracheophyta</taxon>
        <taxon>Spermatophyta</taxon>
        <taxon>Magnoliopsida</taxon>
        <taxon>eudicotyledons</taxon>
        <taxon>Gunneridae</taxon>
        <taxon>Pentapetalae</taxon>
        <taxon>rosids</taxon>
        <taxon>malvids</taxon>
        <taxon>Brassicales</taxon>
        <taxon>Brassicaceae</taxon>
        <taxon>Camelineae</taxon>
        <taxon>Arabidopsis</taxon>
    </lineage>
</organism>
<feature type="signal peptide" evidence="3">
    <location>
        <begin position="1"/>
        <end position="25"/>
    </location>
</feature>
<feature type="chain" id="PRO_0000045471" description="IAA-amino acid hydrolase ILR1-like 5">
    <location>
        <begin position="26"/>
        <end position="435"/>
    </location>
</feature>
<feature type="short sequence motif" description="Prevents secretion from ER" evidence="4">
    <location>
        <begin position="432"/>
        <end position="435"/>
    </location>
</feature>
<feature type="binding site" evidence="2">
    <location>
        <position position="134"/>
    </location>
    <ligand>
        <name>Mn(2+)</name>
        <dbReference type="ChEBI" id="CHEBI:29035"/>
        <label>1</label>
    </ligand>
</feature>
<feature type="binding site" evidence="2">
    <location>
        <position position="134"/>
    </location>
    <ligand>
        <name>Mn(2+)</name>
        <dbReference type="ChEBI" id="CHEBI:29035"/>
        <label>2</label>
    </ligand>
</feature>
<feature type="binding site" evidence="2">
    <location>
        <position position="136"/>
    </location>
    <ligand>
        <name>Mn(2+)</name>
        <dbReference type="ChEBI" id="CHEBI:29035"/>
        <label>2</label>
    </ligand>
</feature>
<feature type="binding site" evidence="2">
    <location>
        <position position="170"/>
    </location>
    <ligand>
        <name>Mn(2+)</name>
        <dbReference type="ChEBI" id="CHEBI:29035"/>
        <label>1</label>
    </ligand>
</feature>
<feature type="binding site" evidence="2">
    <location>
        <position position="194"/>
    </location>
    <ligand>
        <name>Mn(2+)</name>
        <dbReference type="ChEBI" id="CHEBI:29035"/>
        <label>2</label>
    </ligand>
</feature>
<feature type="binding site" evidence="2">
    <location>
        <position position="397"/>
    </location>
    <ligand>
        <name>Mn(2+)</name>
        <dbReference type="ChEBI" id="CHEBI:29035"/>
        <label>1</label>
    </ligand>
</feature>
<comment type="function">
    <text evidence="1">Hydrolyzes certain amino acid conjugates of the plant growth regulator indole-3-acetic acid (IAA).</text>
</comment>
<comment type="subcellular location">
    <subcellularLocation>
        <location evidence="4">Endoplasmic reticulum lumen</location>
    </subcellularLocation>
</comment>
<comment type="similarity">
    <text evidence="6">Belongs to the peptidase M20 family.</text>
</comment>
<reference key="1">
    <citation type="journal article" date="1999" name="Plant Cell">
        <title>IAR3 encodes an auxin conjugate hydrolase from Arabidopsis.</title>
        <authorList>
            <person name="Davies R.T."/>
            <person name="Goetz D.H."/>
            <person name="Lasswell J.E."/>
            <person name="Anderson M.N."/>
            <person name="Bartel B."/>
        </authorList>
    </citation>
    <scope>NUCLEOTIDE SEQUENCE [GENOMIC DNA]</scope>
    <source>
        <strain>cv. Columbia</strain>
    </source>
</reference>
<reference key="2">
    <citation type="journal article" date="2000" name="Nature">
        <title>Sequence and analysis of chromosome 1 of the plant Arabidopsis thaliana.</title>
        <authorList>
            <person name="Theologis A."/>
            <person name="Ecker J.R."/>
            <person name="Palm C.J."/>
            <person name="Federspiel N.A."/>
            <person name="Kaul S."/>
            <person name="White O."/>
            <person name="Alonso J."/>
            <person name="Altafi H."/>
            <person name="Araujo R."/>
            <person name="Bowman C.L."/>
            <person name="Brooks S.Y."/>
            <person name="Buehler E."/>
            <person name="Chan A."/>
            <person name="Chao Q."/>
            <person name="Chen H."/>
            <person name="Cheuk R.F."/>
            <person name="Chin C.W."/>
            <person name="Chung M.K."/>
            <person name="Conn L."/>
            <person name="Conway A.B."/>
            <person name="Conway A.R."/>
            <person name="Creasy T.H."/>
            <person name="Dewar K."/>
            <person name="Dunn P."/>
            <person name="Etgu P."/>
            <person name="Feldblyum T.V."/>
            <person name="Feng J.-D."/>
            <person name="Fong B."/>
            <person name="Fujii C.Y."/>
            <person name="Gill J.E."/>
            <person name="Goldsmith A.D."/>
            <person name="Haas B."/>
            <person name="Hansen N.F."/>
            <person name="Hughes B."/>
            <person name="Huizar L."/>
            <person name="Hunter J.L."/>
            <person name="Jenkins J."/>
            <person name="Johnson-Hopson C."/>
            <person name="Khan S."/>
            <person name="Khaykin E."/>
            <person name="Kim C.J."/>
            <person name="Koo H.L."/>
            <person name="Kremenetskaia I."/>
            <person name="Kurtz D.B."/>
            <person name="Kwan A."/>
            <person name="Lam B."/>
            <person name="Langin-Hooper S."/>
            <person name="Lee A."/>
            <person name="Lee J.M."/>
            <person name="Lenz C.A."/>
            <person name="Li J.H."/>
            <person name="Li Y.-P."/>
            <person name="Lin X."/>
            <person name="Liu S.X."/>
            <person name="Liu Z.A."/>
            <person name="Luros J.S."/>
            <person name="Maiti R."/>
            <person name="Marziali A."/>
            <person name="Militscher J."/>
            <person name="Miranda M."/>
            <person name="Nguyen M."/>
            <person name="Nierman W.C."/>
            <person name="Osborne B.I."/>
            <person name="Pai G."/>
            <person name="Peterson J."/>
            <person name="Pham P.K."/>
            <person name="Rizzo M."/>
            <person name="Rooney T."/>
            <person name="Rowley D."/>
            <person name="Sakano H."/>
            <person name="Salzberg S.L."/>
            <person name="Schwartz J.R."/>
            <person name="Shinn P."/>
            <person name="Southwick A.M."/>
            <person name="Sun H."/>
            <person name="Tallon L.J."/>
            <person name="Tambunga G."/>
            <person name="Toriumi M.J."/>
            <person name="Town C.D."/>
            <person name="Utterback T."/>
            <person name="Van Aken S."/>
            <person name="Vaysberg M."/>
            <person name="Vysotskaia V.S."/>
            <person name="Walker M."/>
            <person name="Wu D."/>
            <person name="Yu G."/>
            <person name="Fraser C.M."/>
            <person name="Venter J.C."/>
            <person name="Davis R.W."/>
        </authorList>
    </citation>
    <scope>NUCLEOTIDE SEQUENCE [LARGE SCALE GENOMIC DNA]</scope>
    <source>
        <strain>cv. Columbia</strain>
    </source>
</reference>
<reference key="3">
    <citation type="journal article" date="2017" name="Plant J.">
        <title>Araport11: a complete reannotation of the Arabidopsis thaliana reference genome.</title>
        <authorList>
            <person name="Cheng C.Y."/>
            <person name="Krishnakumar V."/>
            <person name="Chan A.P."/>
            <person name="Thibaud-Nissen F."/>
            <person name="Schobel S."/>
            <person name="Town C.D."/>
        </authorList>
    </citation>
    <scope>GENOME REANNOTATION</scope>
    <source>
        <strain>cv. Columbia</strain>
    </source>
</reference>
<reference key="4">
    <citation type="journal article" date="2002" name="J. Biol. Chem.">
        <title>Characterization of a family of IAA-amino acid conjugate hydrolases from Arabidopsis.</title>
        <authorList>
            <person name="LeClere S."/>
            <person name="Tellez R."/>
            <person name="Rampey R.A."/>
            <person name="Matsuda S.P.T."/>
            <person name="Bartel B."/>
        </authorList>
    </citation>
    <scope>GENE FAMILY</scope>
</reference>
<keyword id="KW-0256">Endoplasmic reticulum</keyword>
<keyword id="KW-0378">Hydrolase</keyword>
<keyword id="KW-0464">Manganese</keyword>
<keyword id="KW-0479">Metal-binding</keyword>
<keyword id="KW-1185">Reference proteome</keyword>
<keyword id="KW-0732">Signal</keyword>
<accession>Q9SWX9</accession>
<evidence type="ECO:0000250" key="1">
    <source>
        <dbReference type="UniProtKB" id="P54968"/>
    </source>
</evidence>
<evidence type="ECO:0000250" key="2">
    <source>
        <dbReference type="UniProtKB" id="P54970"/>
    </source>
</evidence>
<evidence type="ECO:0000255" key="3"/>
<evidence type="ECO:0000255" key="4">
    <source>
        <dbReference type="PROSITE-ProRule" id="PRU10138"/>
    </source>
</evidence>
<evidence type="ECO:0000303" key="5">
    <source>
    </source>
</evidence>
<evidence type="ECO:0000305" key="6"/>
<evidence type="ECO:0000312" key="7">
    <source>
        <dbReference type="Araport" id="AT1G51780"/>
    </source>
</evidence>
<evidence type="ECO:0000312" key="8">
    <source>
        <dbReference type="EMBL" id="AAG50869.1"/>
    </source>
</evidence>
<protein>
    <recommendedName>
        <fullName evidence="5">IAA-amino acid hydrolase ILR1-like 5</fullName>
        <ecNumber evidence="6">3.5.1.-</ecNumber>
    </recommendedName>
</protein>